<sequence length="322" mass="36501">MVVSISIRGSLLKVSGNPSRWGRLDNLFGLPTLDSCVSVFNTILAEIGLPQFTKCKRLMPGQAKENEKAPLVADGAIIKEVHITSNRAAGKGNEDDYISGLSTQPYRNSVPRLHSNGKSVDWLSKKGNVNLIYPTVYNKAHEMELHSLTKIKNRFSEQSREYNYLLDIISFCKENGVVRFEQKLKSRFLQKNALNYWGLSDYSILNKLHSDFLELDKKLSVNAMDFETISDHLVSSGVVETTRAANTTAMYAIQWFHGHVFDFNKKQVQTHRARLRKIGIDIAQKCNVSKFSPVIVKQTREIKVQECVAPSWYVRPSHLRVA</sequence>
<reference key="1">
    <citation type="submission" date="1993-10" db="EMBL/GenBank/DDBJ databases">
        <title>DNA sequence of the filamentous coliphage If1.</title>
        <authorList>
            <person name="Hill D.F."/>
            <person name="Hughes G."/>
            <person name="McNaughton J.C."/>
            <person name="Stockwell P.A."/>
            <person name="Petersen G.B."/>
        </authorList>
    </citation>
    <scope>NUCLEOTIDE SEQUENCE [GENOMIC DNA]</scope>
</reference>
<organism>
    <name type="scientific">Escherichia phage If1</name>
    <name type="common">Bacteriophage If1</name>
    <dbReference type="NCBI Taxonomy" id="10868"/>
    <lineage>
        <taxon>Viruses</taxon>
        <taxon>Monodnaviria</taxon>
        <taxon>Loebvirae</taxon>
        <taxon>Hofneiviricota</taxon>
        <taxon>Faserviricetes</taxon>
        <taxon>Tubulavirales</taxon>
        <taxon>Inoviridae</taxon>
        <taxon>Infulavirus</taxon>
        <taxon>Infulavirus If1</taxon>
    </lineage>
</organism>
<name>REP_BPIF1</name>
<protein>
    <recommendedName>
        <fullName>Replication-associated protein G2P</fullName>
        <shortName>Rep</shortName>
        <ecNumber>3.1.21.-</ecNumber>
        <ecNumber>6.5.1.1</ecNumber>
    </recommendedName>
    <alternativeName>
        <fullName>G2P</fullName>
    </alternativeName>
    <alternativeName>
        <fullName>Gene 2 protein</fullName>
    </alternativeName>
</protein>
<gene>
    <name type="primary">II</name>
</gene>
<dbReference type="EC" id="3.1.21.-"/>
<dbReference type="EC" id="6.5.1.1"/>
<dbReference type="EMBL" id="U02303">
    <property type="protein sequence ID" value="AAC62160.1"/>
    <property type="molecule type" value="Genomic_DNA"/>
</dbReference>
<dbReference type="RefSeq" id="NP_047361.1">
    <molecule id="O80302-1"/>
    <property type="nucleotide sequence ID" value="NC_001954.1"/>
</dbReference>
<dbReference type="SMR" id="O80302"/>
<dbReference type="KEGG" id="vg:1261860"/>
<dbReference type="Proteomes" id="UP000001833">
    <property type="component" value="Genome"/>
</dbReference>
<dbReference type="GO" id="GO:0003677">
    <property type="term" value="F:DNA binding"/>
    <property type="evidence" value="ECO:0007669"/>
    <property type="project" value="UniProtKB-KW"/>
</dbReference>
<dbReference type="GO" id="GO:0003910">
    <property type="term" value="F:DNA ligase (ATP) activity"/>
    <property type="evidence" value="ECO:0007669"/>
    <property type="project" value="UniProtKB-EC"/>
</dbReference>
<dbReference type="GO" id="GO:0004519">
    <property type="term" value="F:endonuclease activity"/>
    <property type="evidence" value="ECO:0007669"/>
    <property type="project" value="UniProtKB-KW"/>
</dbReference>
<dbReference type="GO" id="GO:0006260">
    <property type="term" value="P:DNA replication"/>
    <property type="evidence" value="ECO:0007669"/>
    <property type="project" value="UniProtKB-KW"/>
</dbReference>
<dbReference type="InterPro" id="IPR022688">
    <property type="entry name" value="G2P_C"/>
</dbReference>
<dbReference type="Pfam" id="PF05155">
    <property type="entry name" value="G2P_X_C"/>
    <property type="match status" value="1"/>
</dbReference>
<organismHost>
    <name type="scientific">Escherichia coli</name>
    <dbReference type="NCBI Taxonomy" id="562"/>
</organismHost>
<comment type="function">
    <text evidence="1">Isoform G2P plays an essential role in viral DNA replication. Binds the origin of replication and cleaves the dsDNA replicative form I (RFI) and becomes covalently bound to it via phosphotyrosine bond, generating the dsDNA replicative form II (RFII). In turn, viral DNA replication initiates at the 3'-OH of the cleavage site. After one round of rolling circle synthesis, protein G2P is linked to the newly synthesized ssDNA and joins the ends of the displaced strand to generate a circular single-stranded molecule ready to be packed into a virion.</text>
</comment>
<comment type="function">
    <text evidence="1">Isoform G10P protein binds to double-stranded DNA and prevents hydrolysis by nucleases. Additionally, G10P is an inhibitor of DNA replication and may have a role in the transition from semiconservative replicative form DNA replication to single-stranded DNA synthesis in the life cycle.</text>
</comment>
<comment type="catalytic activity">
    <reaction>
        <text>ATP + (deoxyribonucleotide)n-3'-hydroxyl + 5'-phospho-(deoxyribonucleotide)m = (deoxyribonucleotide)n+m + AMP + diphosphate.</text>
        <dbReference type="EC" id="6.5.1.1"/>
    </reaction>
</comment>
<comment type="alternative products">
    <event type="alternative initiation"/>
    <isoform>
        <id>O80302-1</id>
        <name>G2P</name>
        <name>Gene 2 protein</name>
        <sequence type="displayed"/>
    </isoform>
    <isoform>
        <id>O80302-2</id>
        <name>G10P</name>
        <name>Gene 10 protein</name>
        <sequence type="described" ref="VSP_037575"/>
    </isoform>
</comment>
<comment type="similarity">
    <text evidence="2">Belongs to the inovirus G2P protein family.</text>
</comment>
<accession>O80302</accession>
<proteinExistence type="inferred from homology"/>
<feature type="chain" id="PRO_0000098232" description="Replication-associated protein G2P">
    <location>
        <begin position="1"/>
        <end position="322"/>
    </location>
</feature>
<feature type="splice variant" id="VSP_037575" description="In isoform G10P." evidence="2">
    <location>
        <begin position="1"/>
        <end position="223"/>
    </location>
</feature>
<keyword id="KW-0024">Alternative initiation</keyword>
<keyword id="KW-0235">DNA replication</keyword>
<keyword id="KW-0238">DNA-binding</keyword>
<keyword id="KW-0255">Endonuclease</keyword>
<keyword id="KW-0378">Hydrolase</keyword>
<keyword id="KW-0436">Ligase</keyword>
<keyword id="KW-0540">Nuclease</keyword>
<keyword id="KW-1185">Reference proteome</keyword>
<evidence type="ECO:0000250" key="1"/>
<evidence type="ECO:0000305" key="2"/>